<reference key="1">
    <citation type="submission" date="1993-08" db="EMBL/GenBank/DDBJ databases">
        <authorList>
            <person name="Guex N."/>
            <person name="Henry H."/>
            <person name="Widmer F."/>
        </authorList>
    </citation>
    <scope>NUCLEOTIDE SEQUENCE [MRNA]</scope>
    <source>
        <strain>cv. Maple Arrow</strain>
        <tissue>Cotyledon</tissue>
    </source>
</reference>
<feature type="chain" id="PRO_0000068811" description="Isocitrate lyase 1">
    <location>
        <begin position="1" status="less than"/>
        <end position="558"/>
    </location>
</feature>
<feature type="short sequence motif" description="Microbody targeting signal" evidence="3">
    <location>
        <begin position="556"/>
        <end position="558"/>
    </location>
</feature>
<feature type="active site" description="Proton acceptor" evidence="2">
    <location>
        <position position="195"/>
    </location>
</feature>
<feature type="binding site" evidence="2">
    <location>
        <begin position="86"/>
        <end position="88"/>
    </location>
    <ligand>
        <name>substrate</name>
    </ligand>
</feature>
<feature type="binding site" evidence="2">
    <location>
        <position position="157"/>
    </location>
    <ligand>
        <name>Mg(2+)</name>
        <dbReference type="ChEBI" id="CHEBI:18420"/>
    </ligand>
</feature>
<feature type="binding site" evidence="2">
    <location>
        <begin position="196"/>
        <end position="197"/>
    </location>
    <ligand>
        <name>substrate</name>
    </ligand>
</feature>
<feature type="binding site" evidence="2">
    <location>
        <position position="232"/>
    </location>
    <ligand>
        <name>substrate</name>
    </ligand>
</feature>
<feature type="binding site" evidence="2">
    <location>
        <begin position="420"/>
        <end position="424"/>
    </location>
    <ligand>
        <name>substrate</name>
    </ligand>
</feature>
<feature type="binding site" evidence="2">
    <location>
        <position position="455"/>
    </location>
    <ligand>
        <name>substrate</name>
    </ligand>
</feature>
<feature type="non-terminal residue">
    <location>
        <position position="1"/>
    </location>
</feature>
<dbReference type="EC" id="4.1.3.1" evidence="1"/>
<dbReference type="EMBL" id="L02329">
    <property type="protein sequence ID" value="AAA33976.1"/>
    <property type="molecule type" value="mRNA"/>
</dbReference>
<dbReference type="PIR" id="T07631">
    <property type="entry name" value="T07631"/>
</dbReference>
<dbReference type="SMR" id="P45456"/>
<dbReference type="FunCoup" id="P45456">
    <property type="interactions" value="471"/>
</dbReference>
<dbReference type="STRING" id="3847.P45456"/>
<dbReference type="PaxDb" id="3847-GLYMA06G45950.1"/>
<dbReference type="eggNOG" id="KOG1260">
    <property type="taxonomic scope" value="Eukaryota"/>
</dbReference>
<dbReference type="InParanoid" id="P45456"/>
<dbReference type="UniPathway" id="UPA00703">
    <property type="reaction ID" value="UER00719"/>
</dbReference>
<dbReference type="Proteomes" id="UP000008827">
    <property type="component" value="Unplaced"/>
</dbReference>
<dbReference type="GO" id="GO:0009514">
    <property type="term" value="C:glyoxysome"/>
    <property type="evidence" value="ECO:0000318"/>
    <property type="project" value="GO_Central"/>
</dbReference>
<dbReference type="GO" id="GO:0004451">
    <property type="term" value="F:isocitrate lyase activity"/>
    <property type="evidence" value="ECO:0000318"/>
    <property type="project" value="GO_Central"/>
</dbReference>
<dbReference type="GO" id="GO:0046872">
    <property type="term" value="F:metal ion binding"/>
    <property type="evidence" value="ECO:0007669"/>
    <property type="project" value="UniProtKB-KW"/>
</dbReference>
<dbReference type="GO" id="GO:0006097">
    <property type="term" value="P:glyoxylate cycle"/>
    <property type="evidence" value="ECO:0007669"/>
    <property type="project" value="UniProtKB-UniPathway"/>
</dbReference>
<dbReference type="GO" id="GO:0006099">
    <property type="term" value="P:tricarboxylic acid cycle"/>
    <property type="evidence" value="ECO:0007669"/>
    <property type="project" value="UniProtKB-KW"/>
</dbReference>
<dbReference type="CDD" id="cd00377">
    <property type="entry name" value="ICL_PEPM"/>
    <property type="match status" value="1"/>
</dbReference>
<dbReference type="FunFam" id="1.10.10.850:FF:000001">
    <property type="entry name" value="Isocitrate lyase"/>
    <property type="match status" value="1"/>
</dbReference>
<dbReference type="Gene3D" id="1.10.10.850">
    <property type="match status" value="1"/>
</dbReference>
<dbReference type="Gene3D" id="3.20.20.60">
    <property type="entry name" value="Phosphoenolpyruvate-binding domains"/>
    <property type="match status" value="1"/>
</dbReference>
<dbReference type="InterPro" id="IPR039556">
    <property type="entry name" value="ICL/PEPM"/>
</dbReference>
<dbReference type="InterPro" id="IPR006254">
    <property type="entry name" value="Isocitrate_lyase"/>
</dbReference>
<dbReference type="InterPro" id="IPR018523">
    <property type="entry name" value="Isocitrate_lyase_ph_CS"/>
</dbReference>
<dbReference type="InterPro" id="IPR015813">
    <property type="entry name" value="Pyrv/PenolPyrv_kinase-like_dom"/>
</dbReference>
<dbReference type="InterPro" id="IPR040442">
    <property type="entry name" value="Pyrv_kinase-like_dom_sf"/>
</dbReference>
<dbReference type="NCBIfam" id="TIGR01346">
    <property type="entry name" value="isocit_lyase"/>
    <property type="match status" value="1"/>
</dbReference>
<dbReference type="PANTHER" id="PTHR21631:SF3">
    <property type="entry name" value="BIFUNCTIONAL GLYOXYLATE CYCLE PROTEIN"/>
    <property type="match status" value="1"/>
</dbReference>
<dbReference type="PANTHER" id="PTHR21631">
    <property type="entry name" value="ISOCITRATE LYASE/MALATE SYNTHASE"/>
    <property type="match status" value="1"/>
</dbReference>
<dbReference type="Pfam" id="PF00463">
    <property type="entry name" value="ICL"/>
    <property type="match status" value="1"/>
</dbReference>
<dbReference type="PIRSF" id="PIRSF001362">
    <property type="entry name" value="Isocit_lyase"/>
    <property type="match status" value="1"/>
</dbReference>
<dbReference type="SUPFAM" id="SSF51621">
    <property type="entry name" value="Phosphoenolpyruvate/pyruvate domain"/>
    <property type="match status" value="1"/>
</dbReference>
<dbReference type="PROSITE" id="PS00161">
    <property type="entry name" value="ISOCITRATE_LYASE"/>
    <property type="match status" value="1"/>
</dbReference>
<protein>
    <recommendedName>
        <fullName evidence="1">Isocitrate lyase 1</fullName>
        <shortName evidence="1">ICL 1</shortName>
        <ecNumber evidence="1">4.1.3.1</ecNumber>
    </recommendedName>
    <alternativeName>
        <fullName evidence="1">Isocitrase 1</fullName>
    </alternativeName>
    <alternativeName>
        <fullName evidence="1">Isocitratsysase 1</fullName>
    </alternativeName>
</protein>
<accession>P45456</accession>
<gene>
    <name type="primary">ICL1</name>
</gene>
<keyword id="KW-0329">Glyoxylate bypass</keyword>
<keyword id="KW-0330">Glyoxysome</keyword>
<keyword id="KW-0456">Lyase</keyword>
<keyword id="KW-0460">Magnesium</keyword>
<keyword id="KW-0479">Metal-binding</keyword>
<keyword id="KW-0576">Peroxisome</keyword>
<keyword id="KW-1185">Reference proteome</keyword>
<keyword id="KW-0816">Tricarboxylic acid cycle</keyword>
<comment type="function">
    <text evidence="1">Involved in storage lipid mobilization during the growth of higher plant seedling.</text>
</comment>
<comment type="catalytic activity">
    <reaction evidence="1">
        <text>D-threo-isocitrate = glyoxylate + succinate</text>
        <dbReference type="Rhea" id="RHEA:13245"/>
        <dbReference type="ChEBI" id="CHEBI:15562"/>
        <dbReference type="ChEBI" id="CHEBI:30031"/>
        <dbReference type="ChEBI" id="CHEBI:36655"/>
        <dbReference type="EC" id="4.1.3.1"/>
    </reaction>
</comment>
<comment type="cofactor">
    <cofactor evidence="2">
        <name>Mg(2+)</name>
        <dbReference type="ChEBI" id="CHEBI:18420"/>
    </cofactor>
</comment>
<comment type="pathway">
    <text>Carbohydrate metabolism; glyoxylate cycle; (S)-malate from isocitrate: step 1/2.</text>
</comment>
<comment type="subunit">
    <text evidence="1">Homotetramer.</text>
</comment>
<comment type="subcellular location">
    <subcellularLocation>
        <location evidence="1">Glyoxysome</location>
    </subcellularLocation>
</comment>
<comment type="similarity">
    <text evidence="4">Belongs to the isocitrate lyase/PEP mutase superfamily. Isocitrate lyase family.</text>
</comment>
<organism>
    <name type="scientific">Glycine max</name>
    <name type="common">Soybean</name>
    <name type="synonym">Glycine hispida</name>
    <dbReference type="NCBI Taxonomy" id="3847"/>
    <lineage>
        <taxon>Eukaryota</taxon>
        <taxon>Viridiplantae</taxon>
        <taxon>Streptophyta</taxon>
        <taxon>Embryophyta</taxon>
        <taxon>Tracheophyta</taxon>
        <taxon>Spermatophyta</taxon>
        <taxon>Magnoliopsida</taxon>
        <taxon>eudicotyledons</taxon>
        <taxon>Gunneridae</taxon>
        <taxon>Pentapetalae</taxon>
        <taxon>rosids</taxon>
        <taxon>fabids</taxon>
        <taxon>Fabales</taxon>
        <taxon>Fabaceae</taxon>
        <taxon>Papilionoideae</taxon>
        <taxon>50 kb inversion clade</taxon>
        <taxon>NPAAA clade</taxon>
        <taxon>indigoferoid/millettioid clade</taxon>
        <taxon>Phaseoleae</taxon>
        <taxon>Glycine</taxon>
        <taxon>Glycine subgen. Soja</taxon>
    </lineage>
</organism>
<proteinExistence type="evidence at transcript level"/>
<name>ACEA1_SOYBN</name>
<sequence>EAEVAEVQAWWNSERFRLTKRPYTARDVVSLRGNLRQTYASNEMAKKLWRLLKNHQANGTASRTFGALDPVQVTQMAKHLDTIYVSGWQCSATHTTSNEPGPDLADYPYDTVPNKVEHLFFAQQYHDRKQKEERMRMSREERARTPYVDYLRPIIADGDTGFGGTTATVKLCKLFVERGAAGIHIEDQSSVTKKCGHMAGKVLVAISEHINRLVAARLQFDVMGVETVLVARTDAEAANLIQSNIDTRDHQFILGVTNPNLKGKSLATLMQQGMAAGKNGAELQALEDEWLSKAQLKTLSEAVVEAIERQNNIGEEEKRRKLNEWMHHSSYERCLSNEEGREIAEKLGVRNLFWDWDLPRTREGFYRFKGSVTASVVRGCAFSPHADVIWMETASPNVVECTEFSEGVRSKHPQMMLGYNLSPSFNWDASGMSDEQMKDFIPKIAKLGYVWQFITVGGLHSNALITSTFARDFANRGMLAYVERIQREERNNGVDTLAHQKWAGANYYDRYLKTVQGGVASTAAMGKGVTEEQFKESWTRSGAVNIDRGSIVVAKARM</sequence>
<evidence type="ECO:0000250" key="1">
    <source>
        <dbReference type="UniProtKB" id="P28297"/>
    </source>
</evidence>
<evidence type="ECO:0000250" key="2">
    <source>
        <dbReference type="UniProtKB" id="P9WKK7"/>
    </source>
</evidence>
<evidence type="ECO:0000255" key="3"/>
<evidence type="ECO:0000305" key="4"/>